<sequence>MSLTADPPACTVPAAGGSSTHKLVNGGADKLIFKIKSSNNNEYRIVPVFGFVDPSGSKDVVITRTAGAPKEDKLVVHFAPAPADATDAQAAFAAVTPAGTVTIPMSATA</sequence>
<proteinExistence type="evidence at transcript level"/>
<gene>
    <name type="primary">ssp-16</name>
    <name type="ORF">T27A3.3</name>
</gene>
<organism>
    <name type="scientific">Caenorhabditis elegans</name>
    <dbReference type="NCBI Taxonomy" id="6239"/>
    <lineage>
        <taxon>Eukaryota</taxon>
        <taxon>Metazoa</taxon>
        <taxon>Ecdysozoa</taxon>
        <taxon>Nematoda</taxon>
        <taxon>Chromadorea</taxon>
        <taxon>Rhabditida</taxon>
        <taxon>Rhabditina</taxon>
        <taxon>Rhabditomorpha</taxon>
        <taxon>Rhabditoidea</taxon>
        <taxon>Rhabditidae</taxon>
        <taxon>Peloderinae</taxon>
        <taxon>Caenorhabditis</taxon>
    </lineage>
</organism>
<name>SSP16_CAEEL</name>
<accession>P91499</accession>
<dbReference type="EMBL" id="FO081496">
    <property type="protein sequence ID" value="CCD72003.1"/>
    <property type="molecule type" value="Genomic_DNA"/>
</dbReference>
<dbReference type="PIR" id="T25918">
    <property type="entry name" value="T25918"/>
</dbReference>
<dbReference type="RefSeq" id="NP_491762.1">
    <property type="nucleotide sequence ID" value="NM_059361.8"/>
</dbReference>
<dbReference type="SMR" id="P91499"/>
<dbReference type="FunCoup" id="P91499">
    <property type="interactions" value="2"/>
</dbReference>
<dbReference type="STRING" id="6239.T27A3.3.1"/>
<dbReference type="PaxDb" id="6239-T27A3.3"/>
<dbReference type="PeptideAtlas" id="P91499"/>
<dbReference type="EnsemblMetazoa" id="T27A3.3.1">
    <property type="protein sequence ID" value="T27A3.3.1"/>
    <property type="gene ID" value="WBGene00006044"/>
</dbReference>
<dbReference type="GeneID" id="172294"/>
<dbReference type="KEGG" id="cel:CELE_T27A3.3"/>
<dbReference type="UCSC" id="T27A3.3">
    <property type="organism name" value="c. elegans"/>
</dbReference>
<dbReference type="AGR" id="WB:WBGene00006044"/>
<dbReference type="CTD" id="172294"/>
<dbReference type="WormBase" id="T27A3.3">
    <property type="protein sequence ID" value="CE14221"/>
    <property type="gene ID" value="WBGene00006044"/>
    <property type="gene designation" value="ssp-16"/>
</dbReference>
<dbReference type="eggNOG" id="ENOG502SQPZ">
    <property type="taxonomic scope" value="Eukaryota"/>
</dbReference>
<dbReference type="GeneTree" id="ENSGT00970000195880"/>
<dbReference type="HOGENOM" id="CLU_147608_1_0_1"/>
<dbReference type="InParanoid" id="P91499"/>
<dbReference type="OMA" id="KEDKMVV"/>
<dbReference type="OrthoDB" id="264603at2759"/>
<dbReference type="PhylomeDB" id="P91499"/>
<dbReference type="PRO" id="PR:P91499"/>
<dbReference type="Proteomes" id="UP000001940">
    <property type="component" value="Chromosome I"/>
</dbReference>
<dbReference type="Bgee" id="WBGene00006044">
    <property type="expression patterns" value="Expressed in material anatomical entity and 3 other cell types or tissues"/>
</dbReference>
<dbReference type="FunFam" id="2.60.40.10:FF:002024">
    <property type="entry name" value="Sperm-specific class P protein 19"/>
    <property type="match status" value="1"/>
</dbReference>
<dbReference type="Gene3D" id="2.60.40.10">
    <property type="entry name" value="Immunoglobulins"/>
    <property type="match status" value="1"/>
</dbReference>
<dbReference type="InterPro" id="IPR013783">
    <property type="entry name" value="Ig-like_fold"/>
</dbReference>
<dbReference type="InterPro" id="IPR000535">
    <property type="entry name" value="MSP_dom"/>
</dbReference>
<dbReference type="InterPro" id="IPR008962">
    <property type="entry name" value="PapD-like_sf"/>
</dbReference>
<dbReference type="InterPro" id="IPR051774">
    <property type="entry name" value="Sperm-specific_class_P"/>
</dbReference>
<dbReference type="PANTHER" id="PTHR22947">
    <property type="entry name" value="MAJOR SPERM PROTEIN"/>
    <property type="match status" value="1"/>
</dbReference>
<dbReference type="PANTHER" id="PTHR22947:SF7">
    <property type="entry name" value="MSP DOMAIN-CONTAINING PROTEIN-RELATED"/>
    <property type="match status" value="1"/>
</dbReference>
<dbReference type="Pfam" id="PF00635">
    <property type="entry name" value="Motile_Sperm"/>
    <property type="match status" value="1"/>
</dbReference>
<dbReference type="SUPFAM" id="SSF49354">
    <property type="entry name" value="PapD-like"/>
    <property type="match status" value="1"/>
</dbReference>
<dbReference type="PROSITE" id="PS50202">
    <property type="entry name" value="MSP"/>
    <property type="match status" value="1"/>
</dbReference>
<keyword id="KW-1185">Reference proteome</keyword>
<reference key="1">
    <citation type="journal article" date="1998" name="Science">
        <title>Genome sequence of the nematode C. elegans: a platform for investigating biology.</title>
        <authorList>
            <consortium name="The C. elegans sequencing consortium"/>
        </authorList>
    </citation>
    <scope>NUCLEOTIDE SEQUENCE [LARGE SCALE GENOMIC DNA]</scope>
    <source>
        <strain>Bristol N2</strain>
    </source>
</reference>
<reference key="2">
    <citation type="journal article" date="2004" name="Mol. Biochem. Parasitol.">
        <title>MSP domain proteins show enhanced expression in male germ line cells.</title>
        <authorList>
            <person name="Tarr D.E.K."/>
            <person name="Scott A.L."/>
        </authorList>
    </citation>
    <scope>TISSUE SPECIFICITY</scope>
</reference>
<comment type="tissue specificity">
    <text evidence="2">Expressed at higher level in testis.</text>
</comment>
<evidence type="ECO:0000255" key="1">
    <source>
        <dbReference type="PROSITE-ProRule" id="PRU00132"/>
    </source>
</evidence>
<evidence type="ECO:0000269" key="2">
    <source>
    </source>
</evidence>
<protein>
    <recommendedName>
        <fullName>Sperm-specific class P protein 16</fullName>
    </recommendedName>
</protein>
<feature type="chain" id="PRO_0000213449" description="Sperm-specific class P protein 16">
    <location>
        <begin position="1"/>
        <end position="109"/>
    </location>
</feature>
<feature type="domain" description="MSP" evidence="1">
    <location>
        <begin position="2"/>
        <end position="109"/>
    </location>
</feature>